<feature type="chain" id="PRO_0000051219" description="Histone transcription regulator slm9">
    <location>
        <begin position="1"/>
        <end position="807"/>
    </location>
</feature>
<feature type="repeat" description="WD 1">
    <location>
        <begin position="62"/>
        <end position="100"/>
    </location>
</feature>
<feature type="repeat" description="WD 2">
    <location>
        <begin position="102"/>
        <end position="140"/>
    </location>
</feature>
<feature type="repeat" description="WD 3">
    <location>
        <begin position="182"/>
        <end position="221"/>
    </location>
</feature>
<feature type="repeat" description="WD 4">
    <location>
        <begin position="230"/>
        <end position="273"/>
    </location>
</feature>
<feature type="repeat" description="WD 5">
    <location>
        <begin position="276"/>
        <end position="322"/>
    </location>
</feature>
<feature type="repeat" description="WD 6">
    <location>
        <begin position="326"/>
        <end position="367"/>
    </location>
</feature>
<feature type="repeat" description="WD 7">
    <location>
        <begin position="492"/>
        <end position="526"/>
    </location>
</feature>
<feature type="repeat" description="WD 8">
    <location>
        <begin position="528"/>
        <end position="574"/>
    </location>
</feature>
<feature type="region of interest" description="Disordered" evidence="2">
    <location>
        <begin position="144"/>
        <end position="164"/>
    </location>
</feature>
<feature type="region of interest" description="Disordered" evidence="2">
    <location>
        <begin position="388"/>
        <end position="437"/>
    </location>
</feature>
<feature type="compositionally biased region" description="Polar residues" evidence="2">
    <location>
        <begin position="395"/>
        <end position="409"/>
    </location>
</feature>
<feature type="compositionally biased region" description="Basic residues" evidence="2">
    <location>
        <begin position="426"/>
        <end position="435"/>
    </location>
</feature>
<feature type="modified residue" description="Phosphoserine" evidence="6">
    <location>
        <position position="406"/>
    </location>
</feature>
<feature type="modified residue" description="Phosphoserine" evidence="6">
    <location>
        <position position="421"/>
    </location>
</feature>
<feature type="modified residue" description="Phosphoserine" evidence="6">
    <location>
        <position position="422"/>
    </location>
</feature>
<comment type="function">
    <text evidence="1 3 4 5">Probably required for replication-independent chromatin assembly (By similarity). Required for transcriptional silencing in the outer repeat (otr) centromeric repeats and the Tf2 long terminal repeat retrotransposons. May play an indirect role in the regulation of cdc2 and/or wee1 at the G2/M stage of mitosis.</text>
</comment>
<comment type="subunit">
    <text evidence="4 5">Interacts with hip1 and hip3.</text>
</comment>
<comment type="interaction">
    <interactant intactId="EBI-1556117">
        <id>O74309</id>
    </interactant>
    <interactant intactId="EBI-1556094">
        <id>P87314</id>
        <label>hip1</label>
    </interactant>
    <organismsDiffer>false</organismsDiffer>
    <experiments>4</experiments>
</comment>
<comment type="interaction">
    <interactant intactId="EBI-1556117">
        <id>O74309</id>
    </interactant>
    <interactant intactId="EBI-1556159">
        <id>P87315</id>
        <label>hip3</label>
    </interactant>
    <organismsDiffer>false</organismsDiffer>
    <experiments>3</experiments>
</comment>
<comment type="subcellular location">
    <subcellularLocation>
        <location>Cytoplasm</location>
    </subcellularLocation>
    <subcellularLocation>
        <location>Nucleus</location>
    </subcellularLocation>
</comment>
<comment type="similarity">
    <text evidence="7">Belongs to the WD repeat HIR1 family.</text>
</comment>
<reference key="1">
    <citation type="journal article" date="2000" name="Genetics">
        <title>Slm9, a novel nuclear protein involved in mitotic control in fission yeast.</title>
        <authorList>
            <person name="Kanoh J."/>
            <person name="Russell P."/>
        </authorList>
    </citation>
    <scope>NUCLEOTIDE SEQUENCE [GENOMIC DNA]</scope>
    <scope>FUNCTION</scope>
    <scope>SUBCELLULAR LOCATION</scope>
</reference>
<reference key="2">
    <citation type="journal article" date="2002" name="Nature">
        <title>The genome sequence of Schizosaccharomyces pombe.</title>
        <authorList>
            <person name="Wood V."/>
            <person name="Gwilliam R."/>
            <person name="Rajandream M.A."/>
            <person name="Lyne M.H."/>
            <person name="Lyne R."/>
            <person name="Stewart A."/>
            <person name="Sgouros J.G."/>
            <person name="Peat N."/>
            <person name="Hayles J."/>
            <person name="Baker S.G."/>
            <person name="Basham D."/>
            <person name="Bowman S."/>
            <person name="Brooks K."/>
            <person name="Brown D."/>
            <person name="Brown S."/>
            <person name="Chillingworth T."/>
            <person name="Churcher C.M."/>
            <person name="Collins M."/>
            <person name="Connor R."/>
            <person name="Cronin A."/>
            <person name="Davis P."/>
            <person name="Feltwell T."/>
            <person name="Fraser A."/>
            <person name="Gentles S."/>
            <person name="Goble A."/>
            <person name="Hamlin N."/>
            <person name="Harris D.E."/>
            <person name="Hidalgo J."/>
            <person name="Hodgson G."/>
            <person name="Holroyd S."/>
            <person name="Hornsby T."/>
            <person name="Howarth S."/>
            <person name="Huckle E.J."/>
            <person name="Hunt S."/>
            <person name="Jagels K."/>
            <person name="James K.D."/>
            <person name="Jones L."/>
            <person name="Jones M."/>
            <person name="Leather S."/>
            <person name="McDonald S."/>
            <person name="McLean J."/>
            <person name="Mooney P."/>
            <person name="Moule S."/>
            <person name="Mungall K.L."/>
            <person name="Murphy L.D."/>
            <person name="Niblett D."/>
            <person name="Odell C."/>
            <person name="Oliver K."/>
            <person name="O'Neil S."/>
            <person name="Pearson D."/>
            <person name="Quail M.A."/>
            <person name="Rabbinowitsch E."/>
            <person name="Rutherford K.M."/>
            <person name="Rutter S."/>
            <person name="Saunders D."/>
            <person name="Seeger K."/>
            <person name="Sharp S."/>
            <person name="Skelton J."/>
            <person name="Simmonds M.N."/>
            <person name="Squares R."/>
            <person name="Squares S."/>
            <person name="Stevens K."/>
            <person name="Taylor K."/>
            <person name="Taylor R.G."/>
            <person name="Tivey A."/>
            <person name="Walsh S.V."/>
            <person name="Warren T."/>
            <person name="Whitehead S."/>
            <person name="Woodward J.R."/>
            <person name="Volckaert G."/>
            <person name="Aert R."/>
            <person name="Robben J."/>
            <person name="Grymonprez B."/>
            <person name="Weltjens I."/>
            <person name="Vanstreels E."/>
            <person name="Rieger M."/>
            <person name="Schaefer M."/>
            <person name="Mueller-Auer S."/>
            <person name="Gabel C."/>
            <person name="Fuchs M."/>
            <person name="Duesterhoeft A."/>
            <person name="Fritzc C."/>
            <person name="Holzer E."/>
            <person name="Moestl D."/>
            <person name="Hilbert H."/>
            <person name="Borzym K."/>
            <person name="Langer I."/>
            <person name="Beck A."/>
            <person name="Lehrach H."/>
            <person name="Reinhardt R."/>
            <person name="Pohl T.M."/>
            <person name="Eger P."/>
            <person name="Zimmermann W."/>
            <person name="Wedler H."/>
            <person name="Wambutt R."/>
            <person name="Purnelle B."/>
            <person name="Goffeau A."/>
            <person name="Cadieu E."/>
            <person name="Dreano S."/>
            <person name="Gloux S."/>
            <person name="Lelaure V."/>
            <person name="Mottier S."/>
            <person name="Galibert F."/>
            <person name="Aves S.J."/>
            <person name="Xiang Z."/>
            <person name="Hunt C."/>
            <person name="Moore K."/>
            <person name="Hurst S.M."/>
            <person name="Lucas M."/>
            <person name="Rochet M."/>
            <person name="Gaillardin C."/>
            <person name="Tallada V.A."/>
            <person name="Garzon A."/>
            <person name="Thode G."/>
            <person name="Daga R.R."/>
            <person name="Cruzado L."/>
            <person name="Jimenez J."/>
            <person name="Sanchez M."/>
            <person name="del Rey F."/>
            <person name="Benito J."/>
            <person name="Dominguez A."/>
            <person name="Revuelta J.L."/>
            <person name="Moreno S."/>
            <person name="Armstrong J."/>
            <person name="Forsburg S.L."/>
            <person name="Cerutti L."/>
            <person name="Lowe T."/>
            <person name="McCombie W.R."/>
            <person name="Paulsen I."/>
            <person name="Potashkin J."/>
            <person name="Shpakovski G.V."/>
            <person name="Ussery D."/>
            <person name="Barrell B.G."/>
            <person name="Nurse P."/>
        </authorList>
    </citation>
    <scope>NUCLEOTIDE SEQUENCE [LARGE SCALE GENOMIC DNA]</scope>
    <source>
        <strain>972 / ATCC 24843</strain>
    </source>
</reference>
<reference key="3">
    <citation type="journal article" date="2004" name="Mol. Cell. Biol.">
        <title>The Schizosaccharomyces pombe HIRA-like protein Hip1 is required for the periodic expression of histone genes and contributes to the function of complex centromeres.</title>
        <authorList>
            <person name="Blackwell C."/>
            <person name="Martin K.A."/>
            <person name="Greenall A."/>
            <person name="Pidoux A."/>
            <person name="Allshire R.C."/>
            <person name="Whitehall S.K."/>
        </authorList>
    </citation>
    <scope>FUNCTION</scope>
    <scope>INTERACTION WITH HIP1</scope>
</reference>
<reference key="4">
    <citation type="journal article" date="2006" name="J. Biol. Chem.">
        <title>Hip3 interacts with the HIRA proteins Hip1 and Slm9 and is required for transcriptional silencing and accurate chromosome segregation.</title>
        <authorList>
            <person name="Greenall A."/>
            <person name="Williams E.S."/>
            <person name="Martin K.A."/>
            <person name="Palmer J.M."/>
            <person name="Gray J."/>
            <person name="Liu C."/>
            <person name="Whitehall S.K."/>
        </authorList>
    </citation>
    <scope>FUNCTION</scope>
    <scope>INTERACTION WITH HIP3</scope>
</reference>
<reference key="5">
    <citation type="journal article" date="2006" name="Nat. Biotechnol.">
        <title>ORFeome cloning and global analysis of protein localization in the fission yeast Schizosaccharomyces pombe.</title>
        <authorList>
            <person name="Matsuyama A."/>
            <person name="Arai R."/>
            <person name="Yashiroda Y."/>
            <person name="Shirai A."/>
            <person name="Kamata A."/>
            <person name="Sekido S."/>
            <person name="Kobayashi Y."/>
            <person name="Hashimoto A."/>
            <person name="Hamamoto M."/>
            <person name="Hiraoka Y."/>
            <person name="Horinouchi S."/>
            <person name="Yoshida M."/>
        </authorList>
    </citation>
    <scope>SUBCELLULAR LOCATION [LARGE SCALE ANALYSIS]</scope>
</reference>
<reference key="6">
    <citation type="journal article" date="2008" name="J. Proteome Res.">
        <title>Phosphoproteome analysis of fission yeast.</title>
        <authorList>
            <person name="Wilson-Grady J.T."/>
            <person name="Villen J."/>
            <person name="Gygi S.P."/>
        </authorList>
    </citation>
    <scope>PHOSPHORYLATION [LARGE SCALE ANALYSIS] AT SER-406; SER-421 AND SER-422</scope>
    <scope>IDENTIFICATION BY MASS SPECTROMETRY</scope>
</reference>
<accession>O74309</accession>
<proteinExistence type="evidence at protein level"/>
<protein>
    <recommendedName>
        <fullName>Histone transcription regulator slm9</fullName>
    </recommendedName>
</protein>
<sequence>MHIFVPKLLENHQFSSISSSKDFVAVSAETNVYILSKDFFYPKSSEKRIIQSLNGHKTTHLSFDSPISCIRFTYDGSCLAVATEAGTFLYHSEKWDKAFQVLSGPAYEVCWSQQGHILATSWKQISIYVKDEGLRTETIVKKTEHADSNHQPAVSIEESKEAVESTSQSSEISFKLIKVIEGHHTFVGGLAFDPMGQFLASQSFDHTLKVWKLSTFGVEKSIAKPFEQMPTGNRFLRLSWSPDGAHIASVNAVNEGAYVIAIVQRDTWTYDINLVGHQGPLECATFNPYLYEDPFQKSIIASAAHDGCVSIWNTACARPMAVIHELSCSSFVDLQWSTSGFELYGVSLDGNLMLLQFEESEFGEKMDTIHYPDDLSYFNSSRSKAHVNKNAAADRTTSPTQGQPESPSKSILLRPPPSIASSPESKRRKCPKKFVARPPVPHPTSLYSQIRIGCPYLKPKLVISKSFGTLIVKNHNQLSLLKCTFSNLDGNDCSWFSYLPNAIVLANGTSVFWAVATEDSSIYIYSPAGRLLLPPVVVAATPCFLECCGDFLCCIVSTGLLYIWNIKNFEAIHSPVSTLPLFHSNFSVSKIARGPSIEQFFVTKQGHPVAIMSDGNAFAFIRDSSSWLRVSEGWWMIGSQYWGPLASESNEESPLGFLERCTDEEIIKAGRGRFLQRLVKALMLRQGYDNYEMLVSIRHLENRLMSSAKLDLEYDFRENLILYAKKIAEEGMKDKMDELCKELLGPLRIPHNGIDTVKVGNRLWSPTIAGNNKRNLLKDIIIHTAKYRDMQRITSQYSDLLRRSALL</sequence>
<dbReference type="EMBL" id="CU329671">
    <property type="protein sequence ID" value="CAA20478.1"/>
    <property type="molecule type" value="Genomic_DNA"/>
</dbReference>
<dbReference type="PIR" id="T39479">
    <property type="entry name" value="T39479"/>
</dbReference>
<dbReference type="RefSeq" id="NP_596243.1">
    <property type="nucleotide sequence ID" value="NM_001022162.2"/>
</dbReference>
<dbReference type="SMR" id="O74309"/>
<dbReference type="BioGRID" id="276665">
    <property type="interactions" value="78"/>
</dbReference>
<dbReference type="FunCoup" id="O74309">
    <property type="interactions" value="8"/>
</dbReference>
<dbReference type="IntAct" id="O74309">
    <property type="interactions" value="2"/>
</dbReference>
<dbReference type="STRING" id="284812.O74309"/>
<dbReference type="iPTMnet" id="O74309"/>
<dbReference type="PaxDb" id="4896-SPBC15D4.03.1"/>
<dbReference type="EnsemblFungi" id="SPBC15D4.03.1">
    <property type="protein sequence ID" value="SPBC15D4.03.1:pep"/>
    <property type="gene ID" value="SPBC15D4.03"/>
</dbReference>
<dbReference type="GeneID" id="2540128"/>
<dbReference type="KEGG" id="spo:2540128"/>
<dbReference type="PomBase" id="SPBC15D4.03">
    <property type="gene designation" value="slm9"/>
</dbReference>
<dbReference type="VEuPathDB" id="FungiDB:SPBC15D4.03"/>
<dbReference type="eggNOG" id="KOG0973">
    <property type="taxonomic scope" value="Eukaryota"/>
</dbReference>
<dbReference type="HOGENOM" id="CLU_350606_0_0_1"/>
<dbReference type="InParanoid" id="O74309"/>
<dbReference type="OMA" id="SEGWWMI"/>
<dbReference type="PhylomeDB" id="O74309"/>
<dbReference type="PRO" id="PR:O74309"/>
<dbReference type="Proteomes" id="UP000002485">
    <property type="component" value="Chromosome II"/>
</dbReference>
<dbReference type="GO" id="GO:0000785">
    <property type="term" value="C:chromatin"/>
    <property type="evidence" value="ECO:0000318"/>
    <property type="project" value="GO_Central"/>
</dbReference>
<dbReference type="GO" id="GO:0005829">
    <property type="term" value="C:cytosol"/>
    <property type="evidence" value="ECO:0007005"/>
    <property type="project" value="PomBase"/>
</dbReference>
<dbReference type="GO" id="GO:0000417">
    <property type="term" value="C:HIR complex"/>
    <property type="evidence" value="ECO:0000314"/>
    <property type="project" value="PomBase"/>
</dbReference>
<dbReference type="GO" id="GO:0005634">
    <property type="term" value="C:nucleus"/>
    <property type="evidence" value="ECO:0000314"/>
    <property type="project" value="PomBase"/>
</dbReference>
<dbReference type="GO" id="GO:0140665">
    <property type="term" value="F:ATP-dependent H3-H4 histone complex chaperone activity"/>
    <property type="evidence" value="ECO:0000269"/>
    <property type="project" value="PomBase"/>
</dbReference>
<dbReference type="GO" id="GO:0006338">
    <property type="term" value="P:chromatin remodeling"/>
    <property type="evidence" value="ECO:0000318"/>
    <property type="project" value="GO_Central"/>
</dbReference>
<dbReference type="GO" id="GO:0006355">
    <property type="term" value="P:regulation of DNA-templated transcription"/>
    <property type="evidence" value="ECO:0007669"/>
    <property type="project" value="InterPro"/>
</dbReference>
<dbReference type="GO" id="GO:0140673">
    <property type="term" value="P:transcription elongation-coupled chromatin remodeling"/>
    <property type="evidence" value="ECO:0000305"/>
    <property type="project" value="PomBase"/>
</dbReference>
<dbReference type="Gene3D" id="2.130.10.10">
    <property type="entry name" value="YVTN repeat-like/Quinoprotein amine dehydrogenase"/>
    <property type="match status" value="2"/>
</dbReference>
<dbReference type="InterPro" id="IPR031120">
    <property type="entry name" value="HIR1-like"/>
</dbReference>
<dbReference type="InterPro" id="IPR011494">
    <property type="entry name" value="HIRA-like_C"/>
</dbReference>
<dbReference type="InterPro" id="IPR015943">
    <property type="entry name" value="WD40/YVTN_repeat-like_dom_sf"/>
</dbReference>
<dbReference type="InterPro" id="IPR036322">
    <property type="entry name" value="WD40_repeat_dom_sf"/>
</dbReference>
<dbReference type="InterPro" id="IPR001680">
    <property type="entry name" value="WD40_rpt"/>
</dbReference>
<dbReference type="PANTHER" id="PTHR13831:SF6">
    <property type="entry name" value="HISTONE TRANSCRIPTION REGULATOR SLM9"/>
    <property type="match status" value="1"/>
</dbReference>
<dbReference type="PANTHER" id="PTHR13831">
    <property type="entry name" value="MEMBER OF THE HIR1 FAMILY OF WD-REPEAT PROTEINS"/>
    <property type="match status" value="1"/>
</dbReference>
<dbReference type="Pfam" id="PF07569">
    <property type="entry name" value="Hira"/>
    <property type="match status" value="1"/>
</dbReference>
<dbReference type="Pfam" id="PF00400">
    <property type="entry name" value="WD40"/>
    <property type="match status" value="1"/>
</dbReference>
<dbReference type="SMART" id="SM00320">
    <property type="entry name" value="WD40"/>
    <property type="match status" value="4"/>
</dbReference>
<dbReference type="SUPFAM" id="SSF50978">
    <property type="entry name" value="WD40 repeat-like"/>
    <property type="match status" value="1"/>
</dbReference>
<dbReference type="PROSITE" id="PS00678">
    <property type="entry name" value="WD_REPEATS_1"/>
    <property type="match status" value="1"/>
</dbReference>
<dbReference type="PROSITE" id="PS50082">
    <property type="entry name" value="WD_REPEATS_2"/>
    <property type="match status" value="1"/>
</dbReference>
<dbReference type="PROSITE" id="PS50294">
    <property type="entry name" value="WD_REPEATS_REGION"/>
    <property type="match status" value="1"/>
</dbReference>
<organism>
    <name type="scientific">Schizosaccharomyces pombe (strain 972 / ATCC 24843)</name>
    <name type="common">Fission yeast</name>
    <dbReference type="NCBI Taxonomy" id="284812"/>
    <lineage>
        <taxon>Eukaryota</taxon>
        <taxon>Fungi</taxon>
        <taxon>Dikarya</taxon>
        <taxon>Ascomycota</taxon>
        <taxon>Taphrinomycotina</taxon>
        <taxon>Schizosaccharomycetes</taxon>
        <taxon>Schizosaccharomycetales</taxon>
        <taxon>Schizosaccharomycetaceae</taxon>
        <taxon>Schizosaccharomyces</taxon>
    </lineage>
</organism>
<evidence type="ECO:0000250" key="1"/>
<evidence type="ECO:0000256" key="2">
    <source>
        <dbReference type="SAM" id="MobiDB-lite"/>
    </source>
</evidence>
<evidence type="ECO:0000269" key="3">
    <source>
    </source>
</evidence>
<evidence type="ECO:0000269" key="4">
    <source>
    </source>
</evidence>
<evidence type="ECO:0000269" key="5">
    <source>
    </source>
</evidence>
<evidence type="ECO:0000269" key="6">
    <source>
    </source>
</evidence>
<evidence type="ECO:0000305" key="7"/>
<keyword id="KW-0156">Chromatin regulator</keyword>
<keyword id="KW-0963">Cytoplasm</keyword>
<keyword id="KW-0539">Nucleus</keyword>
<keyword id="KW-0597">Phosphoprotein</keyword>
<keyword id="KW-1185">Reference proteome</keyword>
<keyword id="KW-0677">Repeat</keyword>
<keyword id="KW-0678">Repressor</keyword>
<keyword id="KW-0804">Transcription</keyword>
<keyword id="KW-0805">Transcription regulation</keyword>
<keyword id="KW-0853">WD repeat</keyword>
<gene>
    <name type="primary">slm9</name>
    <name type="ORF">SPBC15D4.03</name>
</gene>
<name>SLM9_SCHPO</name>